<organism>
    <name type="scientific">Arabidopsis thaliana</name>
    <name type="common">Mouse-ear cress</name>
    <dbReference type="NCBI Taxonomy" id="3702"/>
    <lineage>
        <taxon>Eukaryota</taxon>
        <taxon>Viridiplantae</taxon>
        <taxon>Streptophyta</taxon>
        <taxon>Embryophyta</taxon>
        <taxon>Tracheophyta</taxon>
        <taxon>Spermatophyta</taxon>
        <taxon>Magnoliopsida</taxon>
        <taxon>eudicotyledons</taxon>
        <taxon>Gunneridae</taxon>
        <taxon>Pentapetalae</taxon>
        <taxon>rosids</taxon>
        <taxon>malvids</taxon>
        <taxon>Brassicales</taxon>
        <taxon>Brassicaceae</taxon>
        <taxon>Camelineae</taxon>
        <taxon>Arabidopsis</taxon>
    </lineage>
</organism>
<gene>
    <name evidence="11" type="primary">OHP1</name>
    <name evidence="10" type="synonym">APG16</name>
    <name evidence="9" type="synonym">HLIP</name>
    <name evidence="10" type="synonym">LIL2</name>
    <name evidence="9" type="synonym">OHP</name>
    <name evidence="11" type="synonym">PDE335</name>
    <name evidence="13" type="ordered locus">At5g02120</name>
    <name evidence="14" type="ORF">T7H20.170</name>
</gene>
<feature type="transit peptide" description="Chloroplast" evidence="1">
    <location>
        <begin position="1"/>
        <end position="41"/>
    </location>
</feature>
<feature type="chain" id="PRO_0000422366" description="Light-harvesting complex-like protein OHP1, chloroplastic">
    <location>
        <begin position="42"/>
        <end position="110"/>
    </location>
</feature>
<feature type="topological domain" description="Stromal" evidence="5">
    <location>
        <begin position="42"/>
        <end position="74"/>
    </location>
</feature>
<feature type="transmembrane region" description="Helical" evidence="1">
    <location>
        <begin position="75"/>
        <end position="95"/>
    </location>
</feature>
<feature type="topological domain" description="Lumenal" evidence="5">
    <location>
        <begin position="96"/>
        <end position="110"/>
    </location>
</feature>
<feature type="mutagenesis site" description="Abolishes chlorophyll binding of OHP1 and OHP2 heterodimer; when associated with A-72 and A-74." evidence="8">
    <original>E</original>
    <variation>A</variation>
    <location>
        <position position="69"/>
    </location>
</feature>
<feature type="mutagenesis site" description="Abolishes chlorophyll binding of OHP1 and OHP2 heterodimer; when associated with A-69 and A-74." evidence="8">
    <original>N</original>
    <variation>A</variation>
    <location>
        <position position="72"/>
    </location>
</feature>
<feature type="mutagenesis site" description="Abolishes chlorophyll binding of OHP1 and OHP2 heterodimer; when associated with A-69 and A-72." evidence="8">
    <original>R</original>
    <variation>A</variation>
    <location>
        <position position="74"/>
    </location>
</feature>
<feature type="sequence conflict" description="In Ref. 5; AAM62880." evidence="11" ref="5">
    <original>C</original>
    <variation>Y</variation>
    <location>
        <position position="29"/>
    </location>
</feature>
<accession>O81208</accession>
<accession>Q8LE25</accession>
<sequence length="110" mass="12010">MSSSPLSSSLFHPLSTLSTHCHGRRQNLCFNRKQQPFVVRAAKLPEGVIVPKAQPKSQPAFLGFTQTAEIWNSRACMIGLIGTFIVELILNKGILELIGVEIGKGLDLPL</sequence>
<reference key="1">
    <citation type="journal article" date="2000" name="Plant Mol. Biol.">
        <title>An Arabidopsis thaliana protein homologous to cyanobacterial high-light-inducible proteins.</title>
        <authorList>
            <person name="Jansson S."/>
            <person name="Andersson J."/>
            <person name="Kim S.J."/>
            <person name="Jackowski G."/>
        </authorList>
    </citation>
    <scope>NUCLEOTIDE SEQUENCE [MRNA]</scope>
    <scope>SUBCELLULAR LOCATION</scope>
    <scope>INDUCTION BY HIGH LIGHT</scope>
    <scope>SUBUNIT</scope>
    <source>
        <strain>cv. Columbia</strain>
    </source>
</reference>
<reference key="2">
    <citation type="journal article" date="2000" name="Nature">
        <title>Sequence and analysis of chromosome 5 of the plant Arabidopsis thaliana.</title>
        <authorList>
            <person name="Tabata S."/>
            <person name="Kaneko T."/>
            <person name="Nakamura Y."/>
            <person name="Kotani H."/>
            <person name="Kato T."/>
            <person name="Asamizu E."/>
            <person name="Miyajima N."/>
            <person name="Sasamoto S."/>
            <person name="Kimura T."/>
            <person name="Hosouchi T."/>
            <person name="Kawashima K."/>
            <person name="Kohara M."/>
            <person name="Matsumoto M."/>
            <person name="Matsuno A."/>
            <person name="Muraki A."/>
            <person name="Nakayama S."/>
            <person name="Nakazaki N."/>
            <person name="Naruo K."/>
            <person name="Okumura S."/>
            <person name="Shinpo S."/>
            <person name="Takeuchi C."/>
            <person name="Wada T."/>
            <person name="Watanabe A."/>
            <person name="Yamada M."/>
            <person name="Yasuda M."/>
            <person name="Sato S."/>
            <person name="de la Bastide M."/>
            <person name="Huang E."/>
            <person name="Spiegel L."/>
            <person name="Gnoj L."/>
            <person name="O'Shaughnessy A."/>
            <person name="Preston R."/>
            <person name="Habermann K."/>
            <person name="Murray J."/>
            <person name="Johnson D."/>
            <person name="Rohlfing T."/>
            <person name="Nelson J."/>
            <person name="Stoneking T."/>
            <person name="Pepin K."/>
            <person name="Spieth J."/>
            <person name="Sekhon M."/>
            <person name="Armstrong J."/>
            <person name="Becker M."/>
            <person name="Belter E."/>
            <person name="Cordum H."/>
            <person name="Cordes M."/>
            <person name="Courtney L."/>
            <person name="Courtney W."/>
            <person name="Dante M."/>
            <person name="Du H."/>
            <person name="Edwards J."/>
            <person name="Fryman J."/>
            <person name="Haakensen B."/>
            <person name="Lamar E."/>
            <person name="Latreille P."/>
            <person name="Leonard S."/>
            <person name="Meyer R."/>
            <person name="Mulvaney E."/>
            <person name="Ozersky P."/>
            <person name="Riley A."/>
            <person name="Strowmatt C."/>
            <person name="Wagner-McPherson C."/>
            <person name="Wollam A."/>
            <person name="Yoakum M."/>
            <person name="Bell M."/>
            <person name="Dedhia N."/>
            <person name="Parnell L."/>
            <person name="Shah R."/>
            <person name="Rodriguez M."/>
            <person name="Hoon See L."/>
            <person name="Vil D."/>
            <person name="Baker J."/>
            <person name="Kirchoff K."/>
            <person name="Toth K."/>
            <person name="King L."/>
            <person name="Bahret A."/>
            <person name="Miller B."/>
            <person name="Marra M.A."/>
            <person name="Martienssen R."/>
            <person name="McCombie W.R."/>
            <person name="Wilson R.K."/>
            <person name="Murphy G."/>
            <person name="Bancroft I."/>
            <person name="Volckaert G."/>
            <person name="Wambutt R."/>
            <person name="Duesterhoeft A."/>
            <person name="Stiekema W."/>
            <person name="Pohl T."/>
            <person name="Entian K.-D."/>
            <person name="Terryn N."/>
            <person name="Hartley N."/>
            <person name="Bent E."/>
            <person name="Johnson S."/>
            <person name="Langham S.-A."/>
            <person name="McCullagh B."/>
            <person name="Robben J."/>
            <person name="Grymonprez B."/>
            <person name="Zimmermann W."/>
            <person name="Ramsperger U."/>
            <person name="Wedler H."/>
            <person name="Balke K."/>
            <person name="Wedler E."/>
            <person name="Peters S."/>
            <person name="van Staveren M."/>
            <person name="Dirkse W."/>
            <person name="Mooijman P."/>
            <person name="Klein Lankhorst R."/>
            <person name="Weitzenegger T."/>
            <person name="Bothe G."/>
            <person name="Rose M."/>
            <person name="Hauf J."/>
            <person name="Berneiser S."/>
            <person name="Hempel S."/>
            <person name="Feldpausch M."/>
            <person name="Lamberth S."/>
            <person name="Villarroel R."/>
            <person name="Gielen J."/>
            <person name="Ardiles W."/>
            <person name="Bents O."/>
            <person name="Lemcke K."/>
            <person name="Kolesov G."/>
            <person name="Mayer K.F.X."/>
            <person name="Rudd S."/>
            <person name="Schoof H."/>
            <person name="Schueller C."/>
            <person name="Zaccaria P."/>
            <person name="Mewes H.-W."/>
            <person name="Bevan M."/>
            <person name="Fransz P.F."/>
        </authorList>
    </citation>
    <scope>NUCLEOTIDE SEQUENCE [LARGE SCALE GENOMIC DNA]</scope>
    <source>
        <strain>cv. Columbia</strain>
    </source>
</reference>
<reference key="3">
    <citation type="journal article" date="2017" name="Plant J.">
        <title>Araport11: a complete reannotation of the Arabidopsis thaliana reference genome.</title>
        <authorList>
            <person name="Cheng C.Y."/>
            <person name="Krishnakumar V."/>
            <person name="Chan A.P."/>
            <person name="Thibaud-Nissen F."/>
            <person name="Schobel S."/>
            <person name="Town C.D."/>
        </authorList>
    </citation>
    <scope>GENOME REANNOTATION</scope>
    <source>
        <strain>cv. Columbia</strain>
    </source>
</reference>
<reference key="4">
    <citation type="journal article" date="2003" name="Science">
        <title>Empirical analysis of transcriptional activity in the Arabidopsis genome.</title>
        <authorList>
            <person name="Yamada K."/>
            <person name="Lim J."/>
            <person name="Dale J.M."/>
            <person name="Chen H."/>
            <person name="Shinn P."/>
            <person name="Palm C.J."/>
            <person name="Southwick A.M."/>
            <person name="Wu H.C."/>
            <person name="Kim C.J."/>
            <person name="Nguyen M."/>
            <person name="Pham P.K."/>
            <person name="Cheuk R.F."/>
            <person name="Karlin-Newmann G."/>
            <person name="Liu S.X."/>
            <person name="Lam B."/>
            <person name="Sakano H."/>
            <person name="Wu T."/>
            <person name="Yu G."/>
            <person name="Miranda M."/>
            <person name="Quach H.L."/>
            <person name="Tripp M."/>
            <person name="Chang C.H."/>
            <person name="Lee J.M."/>
            <person name="Toriumi M.J."/>
            <person name="Chan M.M."/>
            <person name="Tang C.C."/>
            <person name="Onodera C.S."/>
            <person name="Deng J.M."/>
            <person name="Akiyama K."/>
            <person name="Ansari Y."/>
            <person name="Arakawa T."/>
            <person name="Banh J."/>
            <person name="Banno F."/>
            <person name="Bowser L."/>
            <person name="Brooks S.Y."/>
            <person name="Carninci P."/>
            <person name="Chao Q."/>
            <person name="Choy N."/>
            <person name="Enju A."/>
            <person name="Goldsmith A.D."/>
            <person name="Gurjal M."/>
            <person name="Hansen N.F."/>
            <person name="Hayashizaki Y."/>
            <person name="Johnson-Hopson C."/>
            <person name="Hsuan V.W."/>
            <person name="Iida K."/>
            <person name="Karnes M."/>
            <person name="Khan S."/>
            <person name="Koesema E."/>
            <person name="Ishida J."/>
            <person name="Jiang P.X."/>
            <person name="Jones T."/>
            <person name="Kawai J."/>
            <person name="Kamiya A."/>
            <person name="Meyers C."/>
            <person name="Nakajima M."/>
            <person name="Narusaka M."/>
            <person name="Seki M."/>
            <person name="Sakurai T."/>
            <person name="Satou M."/>
            <person name="Tamse R."/>
            <person name="Vaysberg M."/>
            <person name="Wallender E.K."/>
            <person name="Wong C."/>
            <person name="Yamamura Y."/>
            <person name="Yuan S."/>
            <person name="Shinozaki K."/>
            <person name="Davis R.W."/>
            <person name="Theologis A."/>
            <person name="Ecker J.R."/>
        </authorList>
    </citation>
    <scope>NUCLEOTIDE SEQUENCE [LARGE SCALE MRNA]</scope>
    <source>
        <strain>cv. Columbia</strain>
    </source>
</reference>
<reference key="5">
    <citation type="submission" date="2002-03" db="EMBL/GenBank/DDBJ databases">
        <title>Full-length cDNA from Arabidopsis thaliana.</title>
        <authorList>
            <person name="Brover V.V."/>
            <person name="Troukhan M.E."/>
            <person name="Alexandrov N.A."/>
            <person name="Lu Y.-P."/>
            <person name="Flavell R.B."/>
            <person name="Feldmann K.A."/>
        </authorList>
    </citation>
    <scope>NUCLEOTIDE SEQUENCE [LARGE SCALE MRNA]</scope>
</reference>
<reference key="6">
    <citation type="journal article" date="2018" name="Plant Physiol.">
        <title>Stable accumulation of photosystem II requires ONE-HELIX PROTEIN1 (OHP1) of the light harvesting-like family.</title>
        <authorList>
            <person name="Myouga F."/>
            <person name="Takahashi K."/>
            <person name="Tanaka R."/>
            <person name="Nagata N."/>
            <person name="Kiss A.Z."/>
            <person name="Funk C."/>
            <person name="Nomura Y."/>
            <person name="Nakagami H."/>
            <person name="Jansson S."/>
            <person name="Shinozaki K."/>
        </authorList>
    </citation>
    <scope>FUNCTION</scope>
    <scope>DISRUPTION PHENOTYPE</scope>
    <scope>SUBCELLULAR LOCATION</scope>
    <scope>SUBUNIT</scope>
    <scope>INTERACTION WITH HCF244</scope>
    <scope>TISSUE SPECIFICITY</scope>
    <scope>DEVELOPMENTAL STAGE</scope>
    <scope>INDUCTION BY HIGH LIGHT</scope>
    <source>
        <strain>cv. Columbia</strain>
    </source>
</reference>
<reference key="7">
    <citation type="journal article" date="2018" name="Plant Signal. Behav.">
        <title>Requirement of ONE-HELIX PROTEIN 1 (OHP1) in early Arabidopsis seedling development and under high light intensity.</title>
        <authorList>
            <person name="Hey D."/>
            <person name="Grimm B."/>
        </authorList>
    </citation>
    <scope>INDUCTION BY HIGH LIGHT</scope>
</reference>
<reference key="8">
    <citation type="journal article" date="2018" name="Plant Physiol.">
        <title>ONE-HELIX PROTEIN2 (OHP2) is required for the stability of OHP1 and assembly factor HCF244 and is functionally linked to PSII biogenesis.</title>
        <authorList>
            <person name="Hey D."/>
            <person name="Grimm B."/>
        </authorList>
    </citation>
    <scope>FUNCTION</scope>
    <scope>INTERACTION WITH OHP2 AND HCF244</scope>
</reference>
<reference key="9">
    <citation type="journal article" date="2019" name="Plant Physiol.">
        <title>OHP1, OHP2, and HCF244 form a transient functional complex with the photosystem II reaction center.</title>
        <authorList>
            <person name="Li Y."/>
            <person name="Liu B."/>
            <person name="Zhang J."/>
            <person name="Kong F."/>
            <person name="Zhang L."/>
            <person name="Meng H."/>
            <person name="Li W."/>
            <person name="Rochaix J.D."/>
            <person name="Li D."/>
            <person name="Peng L."/>
        </authorList>
    </citation>
    <scope>FUNCTION</scope>
    <scope>INTERACTION WITH OHP2 AND HCF244</scope>
    <scope>SUBCELLULAR LOCATION</scope>
    <scope>TOPOLOGY</scope>
</reference>
<reference key="10">
    <citation type="journal article" date="2020" name="Plant Physiol.">
        <title>ONE-HELIX PROTEIN1 and 2 form heterodimers to bind chlorophyll in photosystem II biogenesis.</title>
        <authorList>
            <person name="Hey D."/>
            <person name="Grimm B."/>
        </authorList>
    </citation>
    <scope>FUNCTION</scope>
    <scope>MUTAGENESIS OF GLU-69; ASN-72 AND ARG-74</scope>
</reference>
<reference key="11">
    <citation type="journal article" date="2020" name="Plants (Basel)">
        <title>Exploring the Link between Photosystem II Assembly and Translation of the Chloroplast psbA mRNA.</title>
        <authorList>
            <person name="Chotewutmontri P."/>
            <person name="Williams-Carrier R."/>
            <person name="Barkan A."/>
        </authorList>
    </citation>
    <scope>FUNCTION</scope>
</reference>
<proteinExistence type="evidence at protein level"/>
<dbReference type="EMBL" id="AF054617">
    <property type="protein sequence ID" value="AAC25108.1"/>
    <property type="molecule type" value="mRNA"/>
</dbReference>
<dbReference type="EMBL" id="AL162508">
    <property type="protein sequence ID" value="CAB82985.1"/>
    <property type="molecule type" value="Genomic_DNA"/>
</dbReference>
<dbReference type="EMBL" id="CP002688">
    <property type="protein sequence ID" value="AED90433.1"/>
    <property type="molecule type" value="Genomic_DNA"/>
</dbReference>
<dbReference type="EMBL" id="AY062846">
    <property type="protein sequence ID" value="AAL32924.1"/>
    <property type="molecule type" value="mRNA"/>
</dbReference>
<dbReference type="EMBL" id="AY081584">
    <property type="protein sequence ID" value="AAM10146.1"/>
    <property type="molecule type" value="mRNA"/>
</dbReference>
<dbReference type="EMBL" id="AY085659">
    <property type="protein sequence ID" value="AAM62880.1"/>
    <property type="molecule type" value="mRNA"/>
</dbReference>
<dbReference type="PIR" id="T48233">
    <property type="entry name" value="T48233"/>
</dbReference>
<dbReference type="RefSeq" id="NP_195832.1">
    <property type="nucleotide sequence ID" value="NM_120290.3"/>
</dbReference>
<dbReference type="SMR" id="O81208"/>
<dbReference type="FunCoup" id="O81208">
    <property type="interactions" value="990"/>
</dbReference>
<dbReference type="STRING" id="3702.O81208"/>
<dbReference type="PaxDb" id="3702-AT5G02120.1"/>
<dbReference type="ProteomicsDB" id="249357"/>
<dbReference type="EnsemblPlants" id="AT5G02120.1">
    <property type="protein sequence ID" value="AT5G02120.1"/>
    <property type="gene ID" value="AT5G02120"/>
</dbReference>
<dbReference type="GeneID" id="831799"/>
<dbReference type="Gramene" id="AT5G02120.1">
    <property type="protein sequence ID" value="AT5G02120.1"/>
    <property type="gene ID" value="AT5G02120"/>
</dbReference>
<dbReference type="KEGG" id="ath:AT5G02120"/>
<dbReference type="Araport" id="AT5G02120"/>
<dbReference type="TAIR" id="AT5G02120">
    <property type="gene designation" value="OHP1"/>
</dbReference>
<dbReference type="eggNOG" id="ENOG502SDR8">
    <property type="taxonomic scope" value="Eukaryota"/>
</dbReference>
<dbReference type="HOGENOM" id="CLU_153514_0_1_1"/>
<dbReference type="InParanoid" id="O81208"/>
<dbReference type="OMA" id="THCHGRR"/>
<dbReference type="OrthoDB" id="542523at2759"/>
<dbReference type="PhylomeDB" id="O81208"/>
<dbReference type="PRO" id="PR:O81208"/>
<dbReference type="Proteomes" id="UP000006548">
    <property type="component" value="Chromosome 5"/>
</dbReference>
<dbReference type="ExpressionAtlas" id="O81208">
    <property type="expression patterns" value="baseline and differential"/>
</dbReference>
<dbReference type="GO" id="GO:0009507">
    <property type="term" value="C:chloroplast"/>
    <property type="evidence" value="ECO:0007005"/>
    <property type="project" value="TAIR"/>
</dbReference>
<dbReference type="GO" id="GO:0009535">
    <property type="term" value="C:chloroplast thylakoid membrane"/>
    <property type="evidence" value="ECO:0000314"/>
    <property type="project" value="UniProtKB"/>
</dbReference>
<dbReference type="GO" id="GO:0009523">
    <property type="term" value="C:photosystem II"/>
    <property type="evidence" value="ECO:0000315"/>
    <property type="project" value="UniProtKB"/>
</dbReference>
<dbReference type="GO" id="GO:0005886">
    <property type="term" value="C:plasma membrane"/>
    <property type="evidence" value="ECO:0007005"/>
    <property type="project" value="TAIR"/>
</dbReference>
<dbReference type="GO" id="GO:0016168">
    <property type="term" value="F:chlorophyll binding"/>
    <property type="evidence" value="ECO:0007669"/>
    <property type="project" value="UniProtKB-KW"/>
</dbReference>
<dbReference type="GO" id="GO:0007623">
    <property type="term" value="P:circadian rhythm"/>
    <property type="evidence" value="ECO:0000270"/>
    <property type="project" value="UniProtKB"/>
</dbReference>
<dbReference type="GO" id="GO:0010207">
    <property type="term" value="P:photosystem II assembly"/>
    <property type="evidence" value="ECO:0000315"/>
    <property type="project" value="UniProtKB"/>
</dbReference>
<dbReference type="GO" id="GO:0009644">
    <property type="term" value="P:response to high light intensity"/>
    <property type="evidence" value="ECO:0000270"/>
    <property type="project" value="UniProtKB"/>
</dbReference>
<dbReference type="SUPFAM" id="SSF103511">
    <property type="entry name" value="Chlorophyll a-b binding protein"/>
    <property type="match status" value="1"/>
</dbReference>
<protein>
    <recommendedName>
        <fullName evidence="11">Light-harvesting complex-like protein OHP1, chloroplastic</fullName>
    </recommendedName>
    <alternativeName>
        <fullName evidence="9">High-light-induced protein</fullName>
        <shortName evidence="9">AtHLIP</shortName>
    </alternativeName>
    <alternativeName>
        <fullName evidence="9">One helix protein</fullName>
    </alternativeName>
    <alternativeName>
        <fullName evidence="11">One helix protein 1</fullName>
    </alternativeName>
    <alternativeName>
        <fullName evidence="10">Protein LIGHT-HARVESTING LIKE 2</fullName>
    </alternativeName>
    <alternativeName>
        <fullName evidence="11">Protein PIGMENT DEFECTIVE 335</fullName>
    </alternativeName>
</protein>
<evidence type="ECO:0000255" key="1"/>
<evidence type="ECO:0000269" key="2">
    <source>
    </source>
</evidence>
<evidence type="ECO:0000269" key="3">
    <source>
    </source>
</evidence>
<evidence type="ECO:0000269" key="4">
    <source>
    </source>
</evidence>
<evidence type="ECO:0000269" key="5">
    <source>
    </source>
</evidence>
<evidence type="ECO:0000269" key="6">
    <source>
    </source>
</evidence>
<evidence type="ECO:0000269" key="7">
    <source>
    </source>
</evidence>
<evidence type="ECO:0000269" key="8">
    <source>
    </source>
</evidence>
<evidence type="ECO:0000303" key="9">
    <source>
    </source>
</evidence>
<evidence type="ECO:0000303" key="10">
    <source>
    </source>
</evidence>
<evidence type="ECO:0000305" key="11"/>
<evidence type="ECO:0000305" key="12">
    <source>
    </source>
</evidence>
<evidence type="ECO:0000312" key="13">
    <source>
        <dbReference type="Araport" id="AT5G02120"/>
    </source>
</evidence>
<evidence type="ECO:0000312" key="14">
    <source>
        <dbReference type="EMBL" id="CAB82985.1"/>
    </source>
</evidence>
<name>OHP1_ARATH</name>
<comment type="function">
    <text evidence="3 4 5 7 8 12">May play a photoprotective role in the thylakoid membrane in response to light stress (Probable). Involved in photosystems I (PSI) and II (PSII) core proteins function (PubMed:29438089). Forms a trimeric complex with OHP2 and HCF244 that is required to promote PSII core subunit assembly (PubMed:29930106, PubMed:30397023). The trimeric complex forms a transient PSII reaction center-like complex with PsbA, PsbD, PsbE, PsbF and PsbI subunits in thylakoids for early assembly of PSII as well as PSII repair (PubMed:30397023). The trimeric complex is required for the recruitment of ribosomes to the psbA mRNA during PSII biogenesis and repair (PubMed:31991763). Forms a heterodimer with OHP1 that binds chlorophylls and carotenoids, and that may function in the delivery of pigments to the PsbA subunit of PSII (PubMed:32071152).</text>
</comment>
<comment type="subunit">
    <text evidence="3 4 5 12">May bind chlorophyll and form dimers in the thylakoid membrane (Probable). Component of a high molecular weight complex containing OHP1, OHP2 and HCF244, and PSII core proteins D1/D2, HCF136 and HCF173 (PubMed:29438089). Interacts with HCF244 (Probable) (PubMed:29438089). Forms a trimeric complex with OHP2 and HCF244 that mutually stabilizes each subunit (PubMed:29930106, PubMed:30397023).</text>
</comment>
<comment type="subcellular location">
    <subcellularLocation>
        <location evidence="2 3 5">Plastid</location>
        <location evidence="2 3 5">Chloroplast thylakoid membrane</location>
        <topology evidence="1">Single-pass membrane protein</topology>
    </subcellularLocation>
    <text evidence="2">Associated with both photosystems I and II.</text>
</comment>
<comment type="tissue specificity">
    <text evidence="3">Mostly expressed in cotyledons and shoot apices.</text>
</comment>
<comment type="developmental stage">
    <text evidence="3">Highly expressed in seedling cotyledons and shoot apices in young and mature plants.</text>
</comment>
<comment type="induction">
    <text evidence="2 3 6">Induced by exposure to high light (PubMed:10794534, PubMed:29438089, PubMed:30489183). Expression follows circadian diurnal fluctuations with highest levels before and shortly after the light phase (PubMed:10794534).</text>
</comment>
<comment type="disruption phenotype">
    <text evidence="3">High light sensitivity leading to stunted growth with pale-green leaves on agar plates, but unable to grow on soil (PubMed:29438089). Impaired photosystem II (PSII) core protein function and reduced levels of photosystem I core proteins (PubMed:29438089).</text>
</comment>
<comment type="similarity">
    <text evidence="11">Belongs to the ELIP/psbS family.</text>
</comment>
<keyword id="KW-0148">Chlorophyll</keyword>
<keyword id="KW-0150">Chloroplast</keyword>
<keyword id="KW-0157">Chromophore</keyword>
<keyword id="KW-0472">Membrane</keyword>
<keyword id="KW-0602">Photosynthesis</keyword>
<keyword id="KW-0604">Photosystem II</keyword>
<keyword id="KW-0934">Plastid</keyword>
<keyword id="KW-1185">Reference proteome</keyword>
<keyword id="KW-0793">Thylakoid</keyword>
<keyword id="KW-0809">Transit peptide</keyword>
<keyword id="KW-0812">Transmembrane</keyword>
<keyword id="KW-1133">Transmembrane helix</keyword>